<feature type="chain" id="PRO_1000127853" description="ATP synthase epsilon chain">
    <location>
        <begin position="1"/>
        <end position="139"/>
    </location>
</feature>
<keyword id="KW-0066">ATP synthesis</keyword>
<keyword id="KW-0997">Cell inner membrane</keyword>
<keyword id="KW-1003">Cell membrane</keyword>
<keyword id="KW-0139">CF(1)</keyword>
<keyword id="KW-0375">Hydrogen ion transport</keyword>
<keyword id="KW-0406">Ion transport</keyword>
<keyword id="KW-0472">Membrane</keyword>
<keyword id="KW-0813">Transport</keyword>
<reference key="1">
    <citation type="journal article" date="2008" name="J. Bacteriol.">
        <title>The complete genome sequence of Escherichia coli DH10B: insights into the biology of a laboratory workhorse.</title>
        <authorList>
            <person name="Durfee T."/>
            <person name="Nelson R."/>
            <person name="Baldwin S."/>
            <person name="Plunkett G. III"/>
            <person name="Burland V."/>
            <person name="Mau B."/>
            <person name="Petrosino J.F."/>
            <person name="Qin X."/>
            <person name="Muzny D.M."/>
            <person name="Ayele M."/>
            <person name="Gibbs R.A."/>
            <person name="Csorgo B."/>
            <person name="Posfai G."/>
            <person name="Weinstock G.M."/>
            <person name="Blattner F.R."/>
        </authorList>
    </citation>
    <scope>NUCLEOTIDE SEQUENCE [LARGE SCALE GENOMIC DNA]</scope>
    <source>
        <strain>K12 / DH10B</strain>
    </source>
</reference>
<proteinExistence type="inferred from homology"/>
<dbReference type="EMBL" id="CP000948">
    <property type="protein sequence ID" value="ACB04774.1"/>
    <property type="molecule type" value="Genomic_DNA"/>
</dbReference>
<dbReference type="RefSeq" id="WP_001251965.1">
    <property type="nucleotide sequence ID" value="NC_010473.1"/>
</dbReference>
<dbReference type="SMR" id="B1X9V9"/>
<dbReference type="KEGG" id="ecd:ECDH10B_3918"/>
<dbReference type="HOGENOM" id="CLU_084338_2_0_6"/>
<dbReference type="GO" id="GO:0005886">
    <property type="term" value="C:plasma membrane"/>
    <property type="evidence" value="ECO:0007669"/>
    <property type="project" value="UniProtKB-SubCell"/>
</dbReference>
<dbReference type="GO" id="GO:0045259">
    <property type="term" value="C:proton-transporting ATP synthase complex"/>
    <property type="evidence" value="ECO:0007669"/>
    <property type="project" value="UniProtKB-KW"/>
</dbReference>
<dbReference type="GO" id="GO:0005524">
    <property type="term" value="F:ATP binding"/>
    <property type="evidence" value="ECO:0007669"/>
    <property type="project" value="UniProtKB-UniRule"/>
</dbReference>
<dbReference type="GO" id="GO:0046933">
    <property type="term" value="F:proton-transporting ATP synthase activity, rotational mechanism"/>
    <property type="evidence" value="ECO:0007669"/>
    <property type="project" value="UniProtKB-UniRule"/>
</dbReference>
<dbReference type="CDD" id="cd12152">
    <property type="entry name" value="F1-ATPase_delta"/>
    <property type="match status" value="1"/>
</dbReference>
<dbReference type="FunFam" id="1.20.5.440:FF:000001">
    <property type="entry name" value="ATP synthase epsilon chain"/>
    <property type="match status" value="1"/>
</dbReference>
<dbReference type="FunFam" id="2.60.15.10:FF:000001">
    <property type="entry name" value="ATP synthase epsilon chain"/>
    <property type="match status" value="1"/>
</dbReference>
<dbReference type="Gene3D" id="1.20.5.440">
    <property type="entry name" value="ATP synthase delta/epsilon subunit, C-terminal domain"/>
    <property type="match status" value="1"/>
</dbReference>
<dbReference type="Gene3D" id="2.60.15.10">
    <property type="entry name" value="F0F1 ATP synthase delta/epsilon subunit, N-terminal"/>
    <property type="match status" value="1"/>
</dbReference>
<dbReference type="HAMAP" id="MF_00530">
    <property type="entry name" value="ATP_synth_epsil_bac"/>
    <property type="match status" value="1"/>
</dbReference>
<dbReference type="InterPro" id="IPR036794">
    <property type="entry name" value="ATP_F1_dsu/esu_C_sf"/>
</dbReference>
<dbReference type="InterPro" id="IPR001469">
    <property type="entry name" value="ATP_synth_F1_dsu/esu"/>
</dbReference>
<dbReference type="InterPro" id="IPR020546">
    <property type="entry name" value="ATP_synth_F1_dsu/esu_N"/>
</dbReference>
<dbReference type="InterPro" id="IPR020547">
    <property type="entry name" value="ATP_synth_F1_esu_C"/>
</dbReference>
<dbReference type="InterPro" id="IPR036771">
    <property type="entry name" value="ATPsynth_dsu/esu_N"/>
</dbReference>
<dbReference type="NCBIfam" id="TIGR01216">
    <property type="entry name" value="ATP_synt_epsi"/>
    <property type="match status" value="1"/>
</dbReference>
<dbReference type="NCBIfam" id="NF001847">
    <property type="entry name" value="PRK00571.1-4"/>
    <property type="match status" value="1"/>
</dbReference>
<dbReference type="PANTHER" id="PTHR13822">
    <property type="entry name" value="ATP SYNTHASE DELTA/EPSILON CHAIN"/>
    <property type="match status" value="1"/>
</dbReference>
<dbReference type="PANTHER" id="PTHR13822:SF10">
    <property type="entry name" value="ATP SYNTHASE EPSILON CHAIN, CHLOROPLASTIC"/>
    <property type="match status" value="1"/>
</dbReference>
<dbReference type="Pfam" id="PF00401">
    <property type="entry name" value="ATP-synt_DE"/>
    <property type="match status" value="1"/>
</dbReference>
<dbReference type="Pfam" id="PF02823">
    <property type="entry name" value="ATP-synt_DE_N"/>
    <property type="match status" value="1"/>
</dbReference>
<dbReference type="SUPFAM" id="SSF46604">
    <property type="entry name" value="Epsilon subunit of F1F0-ATP synthase C-terminal domain"/>
    <property type="match status" value="1"/>
</dbReference>
<dbReference type="SUPFAM" id="SSF51344">
    <property type="entry name" value="Epsilon subunit of F1F0-ATP synthase N-terminal domain"/>
    <property type="match status" value="1"/>
</dbReference>
<sequence>MAMTYHLDVVSAEQQMFSGLVEKIQVTGSEGELGIYPGHAPLLTAIKPGMIRIVKQHGHEEFIYLSGGILEVQPGNVTVLADTAIRGQDLDEARAMEAKRKAEEHISSSHGDVDYAQASAELAKAIAQLRVIELTKKAM</sequence>
<protein>
    <recommendedName>
        <fullName evidence="1">ATP synthase epsilon chain</fullName>
    </recommendedName>
    <alternativeName>
        <fullName evidence="1">ATP synthase F1 sector epsilon subunit</fullName>
    </alternativeName>
    <alternativeName>
        <fullName evidence="1">F-ATPase epsilon subunit</fullName>
    </alternativeName>
</protein>
<gene>
    <name evidence="1" type="primary">atpC</name>
    <name type="ordered locus">ECDH10B_3918</name>
</gene>
<evidence type="ECO:0000255" key="1">
    <source>
        <dbReference type="HAMAP-Rule" id="MF_00530"/>
    </source>
</evidence>
<organism>
    <name type="scientific">Escherichia coli (strain K12 / DH10B)</name>
    <dbReference type="NCBI Taxonomy" id="316385"/>
    <lineage>
        <taxon>Bacteria</taxon>
        <taxon>Pseudomonadati</taxon>
        <taxon>Pseudomonadota</taxon>
        <taxon>Gammaproteobacteria</taxon>
        <taxon>Enterobacterales</taxon>
        <taxon>Enterobacteriaceae</taxon>
        <taxon>Escherichia</taxon>
    </lineage>
</organism>
<comment type="function">
    <text evidence="1">Produces ATP from ADP in the presence of a proton gradient across the membrane.</text>
</comment>
<comment type="subunit">
    <text evidence="1">F-type ATPases have 2 components, CF(1) - the catalytic core - and CF(0) - the membrane proton channel. CF(1) has five subunits: alpha(3), beta(3), gamma(1), delta(1), epsilon(1). CF(0) has three main subunits: a, b and c.</text>
</comment>
<comment type="subcellular location">
    <subcellularLocation>
        <location evidence="1">Cell inner membrane</location>
        <topology evidence="1">Peripheral membrane protein</topology>
    </subcellularLocation>
</comment>
<comment type="similarity">
    <text evidence="1">Belongs to the ATPase epsilon chain family.</text>
</comment>
<accession>B1X9V9</accession>
<name>ATPE_ECODH</name>